<comment type="function">
    <text evidence="1">Binds to DNA and alters its conformation. May be involved in regulation of gene expression, nucleoid organization and DNA protection.</text>
</comment>
<comment type="subunit">
    <text evidence="1">Homodimer.</text>
</comment>
<comment type="subcellular location">
    <subcellularLocation>
        <location evidence="1">Cytoplasm</location>
        <location evidence="1">Nucleoid</location>
    </subcellularLocation>
</comment>
<comment type="similarity">
    <text evidence="1">Belongs to the YbaB/EbfC family.</text>
</comment>
<comment type="sequence caution" evidence="2">
    <conflict type="erroneous initiation">
        <sequence resource="EMBL-CDS" id="CAL35739"/>
    </conflict>
</comment>
<feature type="chain" id="PRO_0000170376" description="Nucleoid-associated protein Cj1642">
    <location>
        <begin position="1"/>
        <end position="99"/>
    </location>
</feature>
<evidence type="ECO:0000255" key="1">
    <source>
        <dbReference type="HAMAP-Rule" id="MF_00274"/>
    </source>
</evidence>
<evidence type="ECO:0000305" key="2"/>
<keyword id="KW-0963">Cytoplasm</keyword>
<keyword id="KW-0238">DNA-binding</keyword>
<keyword id="KW-1185">Reference proteome</keyword>
<dbReference type="EMBL" id="AL111168">
    <property type="protein sequence ID" value="CAL35739.1"/>
    <property type="status" value="ALT_INIT"/>
    <property type="molecule type" value="Genomic_DNA"/>
</dbReference>
<dbReference type="PIR" id="H81260">
    <property type="entry name" value="H81260"/>
</dbReference>
<dbReference type="RefSeq" id="YP_002345011.1">
    <property type="nucleotide sequence ID" value="NC_002163.1"/>
</dbReference>
<dbReference type="SMR" id="Q9PM34"/>
<dbReference type="IntAct" id="Q9PM34">
    <property type="interactions" value="32"/>
</dbReference>
<dbReference type="STRING" id="192222.Cj1642"/>
<dbReference type="PaxDb" id="192222-Cj1642"/>
<dbReference type="EnsemblBacteria" id="CAL35739">
    <property type="protein sequence ID" value="CAL35739"/>
    <property type="gene ID" value="Cj1642"/>
</dbReference>
<dbReference type="GeneID" id="905915"/>
<dbReference type="KEGG" id="cje:Cj1642"/>
<dbReference type="PATRIC" id="fig|192222.6.peg.1618"/>
<dbReference type="eggNOG" id="COG0718">
    <property type="taxonomic scope" value="Bacteria"/>
</dbReference>
<dbReference type="HOGENOM" id="CLU_140930_2_1_7"/>
<dbReference type="OrthoDB" id="5343857at2"/>
<dbReference type="Proteomes" id="UP000000799">
    <property type="component" value="Chromosome"/>
</dbReference>
<dbReference type="GO" id="GO:0043590">
    <property type="term" value="C:bacterial nucleoid"/>
    <property type="evidence" value="ECO:0007669"/>
    <property type="project" value="UniProtKB-UniRule"/>
</dbReference>
<dbReference type="GO" id="GO:0005829">
    <property type="term" value="C:cytosol"/>
    <property type="evidence" value="ECO:0007669"/>
    <property type="project" value="TreeGrafter"/>
</dbReference>
<dbReference type="GO" id="GO:0003677">
    <property type="term" value="F:DNA binding"/>
    <property type="evidence" value="ECO:0007669"/>
    <property type="project" value="UniProtKB-UniRule"/>
</dbReference>
<dbReference type="Gene3D" id="3.30.1310.10">
    <property type="entry name" value="Nucleoid-associated protein YbaB-like domain"/>
    <property type="match status" value="1"/>
</dbReference>
<dbReference type="HAMAP" id="MF_00274">
    <property type="entry name" value="DNA_YbaB_EbfC"/>
    <property type="match status" value="1"/>
</dbReference>
<dbReference type="InterPro" id="IPR036894">
    <property type="entry name" value="YbaB-like_sf"/>
</dbReference>
<dbReference type="InterPro" id="IPR004401">
    <property type="entry name" value="YbaB/EbfC"/>
</dbReference>
<dbReference type="NCBIfam" id="TIGR00103">
    <property type="entry name" value="DNA_YbaB_EbfC"/>
    <property type="match status" value="1"/>
</dbReference>
<dbReference type="PANTHER" id="PTHR33449">
    <property type="entry name" value="NUCLEOID-ASSOCIATED PROTEIN YBAB"/>
    <property type="match status" value="1"/>
</dbReference>
<dbReference type="PANTHER" id="PTHR33449:SF1">
    <property type="entry name" value="NUCLEOID-ASSOCIATED PROTEIN YBAB"/>
    <property type="match status" value="1"/>
</dbReference>
<dbReference type="Pfam" id="PF02575">
    <property type="entry name" value="YbaB_DNA_bd"/>
    <property type="match status" value="1"/>
</dbReference>
<dbReference type="PIRSF" id="PIRSF004555">
    <property type="entry name" value="UCP004555"/>
    <property type="match status" value="1"/>
</dbReference>
<dbReference type="SUPFAM" id="SSF82607">
    <property type="entry name" value="YbaB-like"/>
    <property type="match status" value="1"/>
</dbReference>
<reference key="1">
    <citation type="journal article" date="2000" name="Nature">
        <title>The genome sequence of the food-borne pathogen Campylobacter jejuni reveals hypervariable sequences.</title>
        <authorList>
            <person name="Parkhill J."/>
            <person name="Wren B.W."/>
            <person name="Mungall K.L."/>
            <person name="Ketley J.M."/>
            <person name="Churcher C.M."/>
            <person name="Basham D."/>
            <person name="Chillingworth T."/>
            <person name="Davies R.M."/>
            <person name="Feltwell T."/>
            <person name="Holroyd S."/>
            <person name="Jagels K."/>
            <person name="Karlyshev A.V."/>
            <person name="Moule S."/>
            <person name="Pallen M.J."/>
            <person name="Penn C.W."/>
            <person name="Quail M.A."/>
            <person name="Rajandream M.A."/>
            <person name="Rutherford K.M."/>
            <person name="van Vliet A.H.M."/>
            <person name="Whitehead S."/>
            <person name="Barrell B.G."/>
        </authorList>
    </citation>
    <scope>NUCLEOTIDE SEQUENCE [LARGE SCALE GENOMIC DNA]</scope>
    <source>
        <strain>ATCC 700819 / NCTC 11168</strain>
    </source>
</reference>
<gene>
    <name type="ordered locus">Cj1642</name>
</gene>
<organism>
    <name type="scientific">Campylobacter jejuni subsp. jejuni serotype O:2 (strain ATCC 700819 / NCTC 11168)</name>
    <dbReference type="NCBI Taxonomy" id="192222"/>
    <lineage>
        <taxon>Bacteria</taxon>
        <taxon>Pseudomonadati</taxon>
        <taxon>Campylobacterota</taxon>
        <taxon>Epsilonproteobacteria</taxon>
        <taxon>Campylobacterales</taxon>
        <taxon>Campylobacteraceae</taxon>
        <taxon>Campylobacter</taxon>
    </lineage>
</organism>
<proteinExistence type="inferred from homology"/>
<protein>
    <recommendedName>
        <fullName evidence="1">Nucleoid-associated protein Cj1642</fullName>
    </recommendedName>
</protein>
<accession>Q9PM34</accession>
<accession>Q0P7Y6</accession>
<name>Y1642_CAMJE</name>
<sequence length="99" mass="10584">MDFSKMGELLNQVQEKAKNIELELANREFSAKSGAGLVKVSANGKGEIIDVSIDDSLLEDKESLQILLISAINDVLAMVAQNRSSMANDVLGGFGGMKL</sequence>